<organism>
    <name type="scientific">Helianthus annuus</name>
    <name type="common">Common sunflower</name>
    <dbReference type="NCBI Taxonomy" id="4232"/>
    <lineage>
        <taxon>Eukaryota</taxon>
        <taxon>Viridiplantae</taxon>
        <taxon>Streptophyta</taxon>
        <taxon>Embryophyta</taxon>
        <taxon>Tracheophyta</taxon>
        <taxon>Spermatophyta</taxon>
        <taxon>Magnoliopsida</taxon>
        <taxon>eudicotyledons</taxon>
        <taxon>Gunneridae</taxon>
        <taxon>Pentapetalae</taxon>
        <taxon>asterids</taxon>
        <taxon>campanulids</taxon>
        <taxon>Asterales</taxon>
        <taxon>Asteraceae</taxon>
        <taxon>Asteroideae</taxon>
        <taxon>Heliantheae alliance</taxon>
        <taxon>Heliantheae</taxon>
        <taxon>Helianthus</taxon>
    </lineage>
</organism>
<protein>
    <recommendedName>
        <fullName evidence="1">NAD(P)H-quinone oxidoreductase subunit 1, chloroplastic</fullName>
        <ecNumber evidence="1">7.1.1.-</ecNumber>
    </recommendedName>
    <alternativeName>
        <fullName evidence="1">NAD(P)H dehydrogenase subunit 1</fullName>
        <shortName evidence="1">NDH subunit 1</shortName>
    </alternativeName>
    <alternativeName>
        <fullName evidence="1">NADH-plastoquinone oxidoreductase subunit 1</fullName>
    </alternativeName>
</protein>
<name>NU1C_HELAN</name>
<evidence type="ECO:0000255" key="1">
    <source>
        <dbReference type="HAMAP-Rule" id="MF_01350"/>
    </source>
</evidence>
<gene>
    <name evidence="1" type="primary">ndhA</name>
</gene>
<geneLocation type="chloroplast"/>
<comment type="function">
    <text evidence="1">NDH shuttles electrons from NAD(P)H:plastoquinone, via FMN and iron-sulfur (Fe-S) centers, to quinones in the photosynthetic chain and possibly in a chloroplast respiratory chain. The immediate electron acceptor for the enzyme in this species is believed to be plastoquinone. Couples the redox reaction to proton translocation, and thus conserves the redox energy in a proton gradient.</text>
</comment>
<comment type="catalytic activity">
    <reaction evidence="1">
        <text>a plastoquinone + NADH + (n+1) H(+)(in) = a plastoquinol + NAD(+) + n H(+)(out)</text>
        <dbReference type="Rhea" id="RHEA:42608"/>
        <dbReference type="Rhea" id="RHEA-COMP:9561"/>
        <dbReference type="Rhea" id="RHEA-COMP:9562"/>
        <dbReference type="ChEBI" id="CHEBI:15378"/>
        <dbReference type="ChEBI" id="CHEBI:17757"/>
        <dbReference type="ChEBI" id="CHEBI:57540"/>
        <dbReference type="ChEBI" id="CHEBI:57945"/>
        <dbReference type="ChEBI" id="CHEBI:62192"/>
    </reaction>
</comment>
<comment type="catalytic activity">
    <reaction evidence="1">
        <text>a plastoquinone + NADPH + (n+1) H(+)(in) = a plastoquinol + NADP(+) + n H(+)(out)</text>
        <dbReference type="Rhea" id="RHEA:42612"/>
        <dbReference type="Rhea" id="RHEA-COMP:9561"/>
        <dbReference type="Rhea" id="RHEA-COMP:9562"/>
        <dbReference type="ChEBI" id="CHEBI:15378"/>
        <dbReference type="ChEBI" id="CHEBI:17757"/>
        <dbReference type="ChEBI" id="CHEBI:57783"/>
        <dbReference type="ChEBI" id="CHEBI:58349"/>
        <dbReference type="ChEBI" id="CHEBI:62192"/>
    </reaction>
</comment>
<comment type="subunit">
    <text evidence="1">NDH is composed of at least 16 different subunits, 5 of which are encoded in the nucleus.</text>
</comment>
<comment type="subcellular location">
    <subcellularLocation>
        <location evidence="1">Plastid</location>
        <location evidence="1">Chloroplast thylakoid membrane</location>
        <topology evidence="1">Multi-pass membrane protein</topology>
    </subcellularLocation>
</comment>
<comment type="similarity">
    <text evidence="1">Belongs to the complex I subunit 1 family.</text>
</comment>
<dbReference type="EC" id="7.1.1.-" evidence="1"/>
<dbReference type="EMBL" id="DQ383815">
    <property type="protein sequence ID" value="ABD47196.1"/>
    <property type="molecule type" value="Genomic_DNA"/>
</dbReference>
<dbReference type="RefSeq" id="YP_588168.1">
    <property type="nucleotide sequence ID" value="NC_007977.1"/>
</dbReference>
<dbReference type="SMR" id="Q1KXQ8"/>
<dbReference type="GeneID" id="4055622"/>
<dbReference type="KEGG" id="han:4055622"/>
<dbReference type="OrthoDB" id="531329at2759"/>
<dbReference type="GO" id="GO:0009535">
    <property type="term" value="C:chloroplast thylakoid membrane"/>
    <property type="evidence" value="ECO:0007669"/>
    <property type="project" value="UniProtKB-SubCell"/>
</dbReference>
<dbReference type="GO" id="GO:0016655">
    <property type="term" value="F:oxidoreductase activity, acting on NAD(P)H, quinone or similar compound as acceptor"/>
    <property type="evidence" value="ECO:0007669"/>
    <property type="project" value="UniProtKB-UniRule"/>
</dbReference>
<dbReference type="GO" id="GO:0048038">
    <property type="term" value="F:quinone binding"/>
    <property type="evidence" value="ECO:0007669"/>
    <property type="project" value="UniProtKB-KW"/>
</dbReference>
<dbReference type="GO" id="GO:0019684">
    <property type="term" value="P:photosynthesis, light reaction"/>
    <property type="evidence" value="ECO:0007669"/>
    <property type="project" value="UniProtKB-UniRule"/>
</dbReference>
<dbReference type="HAMAP" id="MF_01350">
    <property type="entry name" value="NDH1_NuoH"/>
    <property type="match status" value="1"/>
</dbReference>
<dbReference type="InterPro" id="IPR001694">
    <property type="entry name" value="NADH_UbQ_OxRdtase_su1/FPO"/>
</dbReference>
<dbReference type="InterPro" id="IPR018086">
    <property type="entry name" value="NADH_UbQ_OxRdtase_su1_CS"/>
</dbReference>
<dbReference type="NCBIfam" id="NF004741">
    <property type="entry name" value="PRK06076.1-2"/>
    <property type="match status" value="1"/>
</dbReference>
<dbReference type="PANTHER" id="PTHR11432">
    <property type="entry name" value="NADH DEHYDROGENASE SUBUNIT 1"/>
    <property type="match status" value="1"/>
</dbReference>
<dbReference type="PANTHER" id="PTHR11432:SF3">
    <property type="entry name" value="NADH-UBIQUINONE OXIDOREDUCTASE CHAIN 1"/>
    <property type="match status" value="1"/>
</dbReference>
<dbReference type="Pfam" id="PF00146">
    <property type="entry name" value="NADHdh"/>
    <property type="match status" value="1"/>
</dbReference>
<dbReference type="PROSITE" id="PS00667">
    <property type="entry name" value="COMPLEX1_ND1_1"/>
    <property type="match status" value="1"/>
</dbReference>
<dbReference type="PROSITE" id="PS00668">
    <property type="entry name" value="COMPLEX1_ND1_2"/>
    <property type="match status" value="1"/>
</dbReference>
<reference key="1">
    <citation type="submission" date="2006-01" db="EMBL/GenBank/DDBJ databases">
        <title>A comparison of the first two published chloroplast genomes in Asteraceae: Lactuca and Helianthus.</title>
        <authorList>
            <person name="Timme R.E."/>
            <person name="Kuehl J.V."/>
            <person name="Boore J.L."/>
            <person name="Jansen R.K."/>
        </authorList>
    </citation>
    <scope>NUCLEOTIDE SEQUENCE [LARGE SCALE GENOMIC DNA]</scope>
    <source>
        <strain>cv. HA383</strain>
    </source>
</reference>
<sequence>MIIDTTEVQAINSFSRLESLKEVYGIIWVLIPIFTPVLGITIGVLVIVWLEREISAGIQQRIGPEYAGPLGILQALADGTKLLFKENLLPSRGDTRLFSIGPSIAVISILLSYLVIPFGYRLVLADLSIGVFLWIAISSIAPVGLLMSGYGSNNKYSFLGGLRAAAQSISYEIPLTLCVLSISLLSNSSSTVDIVEAQSKYGFWGWNLWRQPIGFLVFLISSLAECERLPFDLPEAEEELVAGYQTEYSGIKFGLFYVASYLNLLVSSLFVTVLYLGGWNLSIPYIPVPELFDITKRGRVFGTIIGIFITLAKTYLFLFIPIATRWTLPRLRMDQLLNLGWKFLLPISLGNLLLTTSSQLLSL</sequence>
<feature type="chain" id="PRO_0000244884" description="NAD(P)H-quinone oxidoreductase subunit 1, chloroplastic">
    <location>
        <begin position="1"/>
        <end position="363"/>
    </location>
</feature>
<feature type="transmembrane region" description="Helical" evidence="1">
    <location>
        <begin position="26"/>
        <end position="46"/>
    </location>
</feature>
<feature type="transmembrane region" description="Helical" evidence="1">
    <location>
        <begin position="98"/>
        <end position="118"/>
    </location>
</feature>
<feature type="transmembrane region" description="Helical" evidence="1">
    <location>
        <begin position="127"/>
        <end position="147"/>
    </location>
</feature>
<feature type="transmembrane region" description="Helical" evidence="1">
    <location>
        <begin position="253"/>
        <end position="273"/>
    </location>
</feature>
<feature type="transmembrane region" description="Helical" evidence="1">
    <location>
        <begin position="300"/>
        <end position="320"/>
    </location>
</feature>
<feature type="transmembrane region" description="Helical" evidence="1">
    <location>
        <begin position="336"/>
        <end position="356"/>
    </location>
</feature>
<proteinExistence type="inferred from homology"/>
<accession>Q1KXQ8</accession>
<keyword id="KW-0150">Chloroplast</keyword>
<keyword id="KW-0472">Membrane</keyword>
<keyword id="KW-0520">NAD</keyword>
<keyword id="KW-0521">NADP</keyword>
<keyword id="KW-0934">Plastid</keyword>
<keyword id="KW-0618">Plastoquinone</keyword>
<keyword id="KW-0874">Quinone</keyword>
<keyword id="KW-0793">Thylakoid</keyword>
<keyword id="KW-1278">Translocase</keyword>
<keyword id="KW-0812">Transmembrane</keyword>
<keyword id="KW-1133">Transmembrane helix</keyword>